<accession>Q163L1</accession>
<feature type="chain" id="PRO_1000016036" description="Aspartyl/glutamyl-tRNA(Asn/Gln) amidotransferase subunit B">
    <location>
        <begin position="1"/>
        <end position="503"/>
    </location>
</feature>
<sequence length="503" mass="55321">MLDLTYETPAPKVISGAKEDWELVIGMEVHAQVTSAAKLFSAASTQFGAEPNNNVSFVDAAMPGMLPTINEYCVEQAVRTGLGLKAEINLHSAFDRKNYFYPDLPQGYQISQLYHPIVGEGEVLVEMGNGTARLVRVERIHLEQDAGKSIHDMDPNMSFVDLNRTGVALMEIVSRPDIRGPEEAAAYLGKLRQILRYLGTCNGDMQSGAMRADVNVSICRPGQYEKYQATQDFSHLGTRCEIKNMNSMRFIQQAIEVEARRQIAIVEAGGTVDQETRLYDPDRNETRSMRSKEEAHDYRYFPDPDLLPLEIEQAWVDDIAANLPELPDAKKARFRNDFGLSDYDASVLTADLDSAGYFEAVAAGRDGKMAANWVINELFGRLKKEDHAITDSPVSPAQLGGIIDLIASDAISGKIAKDVFEICYTTGRDPAEIVETEGMKQVTDTGAIEAAVDEIIAANPDQVAKARENPKLAGWFVGQVMKATGGKANPKVVNQLIAKRLAE</sequence>
<keyword id="KW-0067">ATP-binding</keyword>
<keyword id="KW-0436">Ligase</keyword>
<keyword id="KW-0547">Nucleotide-binding</keyword>
<keyword id="KW-0648">Protein biosynthesis</keyword>
<keyword id="KW-1185">Reference proteome</keyword>
<evidence type="ECO:0000255" key="1">
    <source>
        <dbReference type="HAMAP-Rule" id="MF_00121"/>
    </source>
</evidence>
<dbReference type="EC" id="6.3.5.-" evidence="1"/>
<dbReference type="EMBL" id="CP000362">
    <property type="protein sequence ID" value="ABG32832.1"/>
    <property type="molecule type" value="Genomic_DNA"/>
</dbReference>
<dbReference type="RefSeq" id="WP_011569448.1">
    <property type="nucleotide sequence ID" value="NC_008209.1"/>
</dbReference>
<dbReference type="SMR" id="Q163L1"/>
<dbReference type="STRING" id="375451.RD1_3333"/>
<dbReference type="KEGG" id="rde:RD1_3333"/>
<dbReference type="eggNOG" id="COG0064">
    <property type="taxonomic scope" value="Bacteria"/>
</dbReference>
<dbReference type="HOGENOM" id="CLU_019240_0_0_5"/>
<dbReference type="OrthoDB" id="9804078at2"/>
<dbReference type="Proteomes" id="UP000007029">
    <property type="component" value="Chromosome"/>
</dbReference>
<dbReference type="GO" id="GO:0050566">
    <property type="term" value="F:asparaginyl-tRNA synthase (glutamine-hydrolyzing) activity"/>
    <property type="evidence" value="ECO:0007669"/>
    <property type="project" value="RHEA"/>
</dbReference>
<dbReference type="GO" id="GO:0005524">
    <property type="term" value="F:ATP binding"/>
    <property type="evidence" value="ECO:0007669"/>
    <property type="project" value="UniProtKB-KW"/>
</dbReference>
<dbReference type="GO" id="GO:0050567">
    <property type="term" value="F:glutaminyl-tRNA synthase (glutamine-hydrolyzing) activity"/>
    <property type="evidence" value="ECO:0007669"/>
    <property type="project" value="UniProtKB-UniRule"/>
</dbReference>
<dbReference type="GO" id="GO:0070681">
    <property type="term" value="P:glutaminyl-tRNAGln biosynthesis via transamidation"/>
    <property type="evidence" value="ECO:0007669"/>
    <property type="project" value="TreeGrafter"/>
</dbReference>
<dbReference type="GO" id="GO:0006412">
    <property type="term" value="P:translation"/>
    <property type="evidence" value="ECO:0007669"/>
    <property type="project" value="UniProtKB-UniRule"/>
</dbReference>
<dbReference type="FunFam" id="1.10.10.410:FF:000001">
    <property type="entry name" value="Aspartyl/glutamyl-tRNA(Asn/Gln) amidotransferase subunit B"/>
    <property type="match status" value="1"/>
</dbReference>
<dbReference type="FunFam" id="1.10.150.380:FF:000001">
    <property type="entry name" value="Aspartyl/glutamyl-tRNA(Asn/Gln) amidotransferase subunit B"/>
    <property type="match status" value="1"/>
</dbReference>
<dbReference type="Gene3D" id="1.10.10.410">
    <property type="match status" value="1"/>
</dbReference>
<dbReference type="Gene3D" id="1.10.150.380">
    <property type="entry name" value="GatB domain, N-terminal subdomain"/>
    <property type="match status" value="1"/>
</dbReference>
<dbReference type="HAMAP" id="MF_00121">
    <property type="entry name" value="GatB"/>
    <property type="match status" value="1"/>
</dbReference>
<dbReference type="InterPro" id="IPR017959">
    <property type="entry name" value="Asn/Gln-tRNA_amidoTrfase_suB/E"/>
</dbReference>
<dbReference type="InterPro" id="IPR006075">
    <property type="entry name" value="Asn/Gln-tRNA_Trfase_suB/E_cat"/>
</dbReference>
<dbReference type="InterPro" id="IPR018027">
    <property type="entry name" value="Asn/Gln_amidotransferase"/>
</dbReference>
<dbReference type="InterPro" id="IPR003789">
    <property type="entry name" value="Asn/Gln_tRNA_amidoTrase-B-like"/>
</dbReference>
<dbReference type="InterPro" id="IPR004413">
    <property type="entry name" value="GatB"/>
</dbReference>
<dbReference type="InterPro" id="IPR042114">
    <property type="entry name" value="GatB_C_1"/>
</dbReference>
<dbReference type="InterPro" id="IPR023168">
    <property type="entry name" value="GatB_Yqey_C_2"/>
</dbReference>
<dbReference type="InterPro" id="IPR017958">
    <property type="entry name" value="Gln-tRNA_amidoTrfase_suB_CS"/>
</dbReference>
<dbReference type="InterPro" id="IPR014746">
    <property type="entry name" value="Gln_synth/guanido_kin_cat_dom"/>
</dbReference>
<dbReference type="NCBIfam" id="TIGR00133">
    <property type="entry name" value="gatB"/>
    <property type="match status" value="1"/>
</dbReference>
<dbReference type="NCBIfam" id="NF004012">
    <property type="entry name" value="PRK05477.1-2"/>
    <property type="match status" value="1"/>
</dbReference>
<dbReference type="NCBIfam" id="NF004014">
    <property type="entry name" value="PRK05477.1-4"/>
    <property type="match status" value="1"/>
</dbReference>
<dbReference type="NCBIfam" id="NF004015">
    <property type="entry name" value="PRK05477.1-5"/>
    <property type="match status" value="1"/>
</dbReference>
<dbReference type="PANTHER" id="PTHR11659">
    <property type="entry name" value="GLUTAMYL-TRNA GLN AMIDOTRANSFERASE SUBUNIT B MITOCHONDRIAL AND PROKARYOTIC PET112-RELATED"/>
    <property type="match status" value="1"/>
</dbReference>
<dbReference type="PANTHER" id="PTHR11659:SF0">
    <property type="entry name" value="GLUTAMYL-TRNA(GLN) AMIDOTRANSFERASE SUBUNIT B, MITOCHONDRIAL"/>
    <property type="match status" value="1"/>
</dbReference>
<dbReference type="Pfam" id="PF02934">
    <property type="entry name" value="GatB_N"/>
    <property type="match status" value="1"/>
</dbReference>
<dbReference type="Pfam" id="PF02637">
    <property type="entry name" value="GatB_Yqey"/>
    <property type="match status" value="1"/>
</dbReference>
<dbReference type="SMART" id="SM00845">
    <property type="entry name" value="GatB_Yqey"/>
    <property type="match status" value="1"/>
</dbReference>
<dbReference type="SUPFAM" id="SSF89095">
    <property type="entry name" value="GatB/YqeY motif"/>
    <property type="match status" value="1"/>
</dbReference>
<dbReference type="SUPFAM" id="SSF55931">
    <property type="entry name" value="Glutamine synthetase/guanido kinase"/>
    <property type="match status" value="1"/>
</dbReference>
<dbReference type="PROSITE" id="PS01234">
    <property type="entry name" value="GATB"/>
    <property type="match status" value="1"/>
</dbReference>
<gene>
    <name evidence="1" type="primary">gatB</name>
    <name type="ordered locus">RD1_3333</name>
</gene>
<protein>
    <recommendedName>
        <fullName evidence="1">Aspartyl/glutamyl-tRNA(Asn/Gln) amidotransferase subunit B</fullName>
        <shortName evidence="1">Asp/Glu-ADT subunit B</shortName>
        <ecNumber evidence="1">6.3.5.-</ecNumber>
    </recommendedName>
</protein>
<name>GATB_ROSDO</name>
<organism>
    <name type="scientific">Roseobacter denitrificans (strain ATCC 33942 / OCh 114)</name>
    <name type="common">Erythrobacter sp. (strain OCh 114)</name>
    <name type="synonym">Roseobacter denitrificans</name>
    <dbReference type="NCBI Taxonomy" id="375451"/>
    <lineage>
        <taxon>Bacteria</taxon>
        <taxon>Pseudomonadati</taxon>
        <taxon>Pseudomonadota</taxon>
        <taxon>Alphaproteobacteria</taxon>
        <taxon>Rhodobacterales</taxon>
        <taxon>Roseobacteraceae</taxon>
        <taxon>Roseobacter</taxon>
    </lineage>
</organism>
<proteinExistence type="inferred from homology"/>
<comment type="function">
    <text evidence="1">Allows the formation of correctly charged Asn-tRNA(Asn) or Gln-tRNA(Gln) through the transamidation of misacylated Asp-tRNA(Asn) or Glu-tRNA(Gln) in organisms which lack either or both of asparaginyl-tRNA or glutaminyl-tRNA synthetases. The reaction takes place in the presence of glutamine and ATP through an activated phospho-Asp-tRNA(Asn) or phospho-Glu-tRNA(Gln).</text>
</comment>
<comment type="catalytic activity">
    <reaction evidence="1">
        <text>L-glutamyl-tRNA(Gln) + L-glutamine + ATP + H2O = L-glutaminyl-tRNA(Gln) + L-glutamate + ADP + phosphate + H(+)</text>
        <dbReference type="Rhea" id="RHEA:17521"/>
        <dbReference type="Rhea" id="RHEA-COMP:9681"/>
        <dbReference type="Rhea" id="RHEA-COMP:9684"/>
        <dbReference type="ChEBI" id="CHEBI:15377"/>
        <dbReference type="ChEBI" id="CHEBI:15378"/>
        <dbReference type="ChEBI" id="CHEBI:29985"/>
        <dbReference type="ChEBI" id="CHEBI:30616"/>
        <dbReference type="ChEBI" id="CHEBI:43474"/>
        <dbReference type="ChEBI" id="CHEBI:58359"/>
        <dbReference type="ChEBI" id="CHEBI:78520"/>
        <dbReference type="ChEBI" id="CHEBI:78521"/>
        <dbReference type="ChEBI" id="CHEBI:456216"/>
    </reaction>
</comment>
<comment type="catalytic activity">
    <reaction evidence="1">
        <text>L-aspartyl-tRNA(Asn) + L-glutamine + ATP + H2O = L-asparaginyl-tRNA(Asn) + L-glutamate + ADP + phosphate + 2 H(+)</text>
        <dbReference type="Rhea" id="RHEA:14513"/>
        <dbReference type="Rhea" id="RHEA-COMP:9674"/>
        <dbReference type="Rhea" id="RHEA-COMP:9677"/>
        <dbReference type="ChEBI" id="CHEBI:15377"/>
        <dbReference type="ChEBI" id="CHEBI:15378"/>
        <dbReference type="ChEBI" id="CHEBI:29985"/>
        <dbReference type="ChEBI" id="CHEBI:30616"/>
        <dbReference type="ChEBI" id="CHEBI:43474"/>
        <dbReference type="ChEBI" id="CHEBI:58359"/>
        <dbReference type="ChEBI" id="CHEBI:78515"/>
        <dbReference type="ChEBI" id="CHEBI:78516"/>
        <dbReference type="ChEBI" id="CHEBI:456216"/>
    </reaction>
</comment>
<comment type="subunit">
    <text evidence="1">Heterotrimer of A, B and C subunits.</text>
</comment>
<comment type="similarity">
    <text evidence="1">Belongs to the GatB/GatE family. GatB subfamily.</text>
</comment>
<reference key="1">
    <citation type="journal article" date="2007" name="J. Bacteriol.">
        <title>The complete genome sequence of Roseobacter denitrificans reveals a mixotrophic rather than photosynthetic metabolism.</title>
        <authorList>
            <person name="Swingley W.D."/>
            <person name="Sadekar S."/>
            <person name="Mastrian S.D."/>
            <person name="Matthies H.J."/>
            <person name="Hao J."/>
            <person name="Ramos H."/>
            <person name="Acharya C.R."/>
            <person name="Conrad A.L."/>
            <person name="Taylor H.L."/>
            <person name="Dejesa L.C."/>
            <person name="Shah M.K."/>
            <person name="O'Huallachain M.E."/>
            <person name="Lince M.T."/>
            <person name="Blankenship R.E."/>
            <person name="Beatty J.T."/>
            <person name="Touchman J.W."/>
        </authorList>
    </citation>
    <scope>NUCLEOTIDE SEQUENCE [LARGE SCALE GENOMIC DNA]</scope>
    <source>
        <strain>ATCC 33942 / OCh 114</strain>
    </source>
</reference>